<evidence type="ECO:0000255" key="1">
    <source>
        <dbReference type="HAMAP-Rule" id="MF_01382"/>
    </source>
</evidence>
<dbReference type="EC" id="7.4.2.8" evidence="1"/>
<dbReference type="EMBL" id="CP000151">
    <property type="protein sequence ID" value="ABB07255.1"/>
    <property type="molecule type" value="Genomic_DNA"/>
</dbReference>
<dbReference type="RefSeq" id="WP_011350847.1">
    <property type="nucleotide sequence ID" value="NC_007510.1"/>
</dbReference>
<dbReference type="SMR" id="Q39JW1"/>
<dbReference type="GeneID" id="45093568"/>
<dbReference type="KEGG" id="bur:Bcep18194_A3654"/>
<dbReference type="PATRIC" id="fig|482957.22.peg.508"/>
<dbReference type="HOGENOM" id="CLU_005314_3_0_4"/>
<dbReference type="Proteomes" id="UP000002705">
    <property type="component" value="Chromosome 1"/>
</dbReference>
<dbReference type="GO" id="GO:0031522">
    <property type="term" value="C:cell envelope Sec protein transport complex"/>
    <property type="evidence" value="ECO:0007669"/>
    <property type="project" value="TreeGrafter"/>
</dbReference>
<dbReference type="GO" id="GO:0005829">
    <property type="term" value="C:cytosol"/>
    <property type="evidence" value="ECO:0007669"/>
    <property type="project" value="TreeGrafter"/>
</dbReference>
<dbReference type="GO" id="GO:0005886">
    <property type="term" value="C:plasma membrane"/>
    <property type="evidence" value="ECO:0007669"/>
    <property type="project" value="UniProtKB-SubCell"/>
</dbReference>
<dbReference type="GO" id="GO:0005524">
    <property type="term" value="F:ATP binding"/>
    <property type="evidence" value="ECO:0007669"/>
    <property type="project" value="UniProtKB-UniRule"/>
</dbReference>
<dbReference type="GO" id="GO:0046872">
    <property type="term" value="F:metal ion binding"/>
    <property type="evidence" value="ECO:0007669"/>
    <property type="project" value="UniProtKB-KW"/>
</dbReference>
<dbReference type="GO" id="GO:0008564">
    <property type="term" value="F:protein-exporting ATPase activity"/>
    <property type="evidence" value="ECO:0007669"/>
    <property type="project" value="UniProtKB-EC"/>
</dbReference>
<dbReference type="GO" id="GO:0065002">
    <property type="term" value="P:intracellular protein transmembrane transport"/>
    <property type="evidence" value="ECO:0007669"/>
    <property type="project" value="UniProtKB-UniRule"/>
</dbReference>
<dbReference type="GO" id="GO:0017038">
    <property type="term" value="P:protein import"/>
    <property type="evidence" value="ECO:0007669"/>
    <property type="project" value="InterPro"/>
</dbReference>
<dbReference type="GO" id="GO:0006605">
    <property type="term" value="P:protein targeting"/>
    <property type="evidence" value="ECO:0007669"/>
    <property type="project" value="UniProtKB-UniRule"/>
</dbReference>
<dbReference type="GO" id="GO:0043952">
    <property type="term" value="P:protein transport by the Sec complex"/>
    <property type="evidence" value="ECO:0007669"/>
    <property type="project" value="TreeGrafter"/>
</dbReference>
<dbReference type="CDD" id="cd17928">
    <property type="entry name" value="DEXDc_SecA"/>
    <property type="match status" value="1"/>
</dbReference>
<dbReference type="CDD" id="cd18803">
    <property type="entry name" value="SF2_C_secA"/>
    <property type="match status" value="1"/>
</dbReference>
<dbReference type="FunFam" id="3.40.50.300:FF:000081">
    <property type="entry name" value="Preprotein translocase subunit SecA"/>
    <property type="match status" value="1"/>
</dbReference>
<dbReference type="FunFam" id="3.40.50.300:FF:000113">
    <property type="entry name" value="Preprotein translocase subunit SecA"/>
    <property type="match status" value="1"/>
</dbReference>
<dbReference type="FunFam" id="3.90.1440.10:FF:000001">
    <property type="entry name" value="Preprotein translocase subunit SecA"/>
    <property type="match status" value="1"/>
</dbReference>
<dbReference type="FunFam" id="1.10.3060.10:FF:000003">
    <property type="entry name" value="Protein translocase subunit SecA"/>
    <property type="match status" value="1"/>
</dbReference>
<dbReference type="Gene3D" id="1.10.3060.10">
    <property type="entry name" value="Helical scaffold and wing domains of SecA"/>
    <property type="match status" value="1"/>
</dbReference>
<dbReference type="Gene3D" id="3.40.50.300">
    <property type="entry name" value="P-loop containing nucleotide triphosphate hydrolases"/>
    <property type="match status" value="2"/>
</dbReference>
<dbReference type="Gene3D" id="3.90.1440.10">
    <property type="entry name" value="SecA, preprotein cross-linking domain"/>
    <property type="match status" value="1"/>
</dbReference>
<dbReference type="HAMAP" id="MF_01382">
    <property type="entry name" value="SecA"/>
    <property type="match status" value="1"/>
</dbReference>
<dbReference type="InterPro" id="IPR014001">
    <property type="entry name" value="Helicase_ATP-bd"/>
</dbReference>
<dbReference type="InterPro" id="IPR001650">
    <property type="entry name" value="Helicase_C-like"/>
</dbReference>
<dbReference type="InterPro" id="IPR027417">
    <property type="entry name" value="P-loop_NTPase"/>
</dbReference>
<dbReference type="InterPro" id="IPR004027">
    <property type="entry name" value="SEC_C_motif"/>
</dbReference>
<dbReference type="InterPro" id="IPR000185">
    <property type="entry name" value="SecA"/>
</dbReference>
<dbReference type="InterPro" id="IPR020937">
    <property type="entry name" value="SecA_CS"/>
</dbReference>
<dbReference type="InterPro" id="IPR011115">
    <property type="entry name" value="SecA_DEAD"/>
</dbReference>
<dbReference type="InterPro" id="IPR014018">
    <property type="entry name" value="SecA_motor_DEAD"/>
</dbReference>
<dbReference type="InterPro" id="IPR011130">
    <property type="entry name" value="SecA_preprotein_X-link_dom"/>
</dbReference>
<dbReference type="InterPro" id="IPR044722">
    <property type="entry name" value="SecA_SF2_C"/>
</dbReference>
<dbReference type="InterPro" id="IPR011116">
    <property type="entry name" value="SecA_Wing/Scaffold"/>
</dbReference>
<dbReference type="InterPro" id="IPR036266">
    <property type="entry name" value="SecA_Wing/Scaffold_sf"/>
</dbReference>
<dbReference type="InterPro" id="IPR036670">
    <property type="entry name" value="SecA_X-link_sf"/>
</dbReference>
<dbReference type="NCBIfam" id="NF009538">
    <property type="entry name" value="PRK12904.1"/>
    <property type="match status" value="1"/>
</dbReference>
<dbReference type="NCBIfam" id="TIGR00963">
    <property type="entry name" value="secA"/>
    <property type="match status" value="1"/>
</dbReference>
<dbReference type="PANTHER" id="PTHR30612:SF0">
    <property type="entry name" value="CHLOROPLAST PROTEIN-TRANSPORTING ATPASE"/>
    <property type="match status" value="1"/>
</dbReference>
<dbReference type="PANTHER" id="PTHR30612">
    <property type="entry name" value="SECA INNER MEMBRANE COMPONENT OF SEC PROTEIN SECRETION SYSTEM"/>
    <property type="match status" value="1"/>
</dbReference>
<dbReference type="Pfam" id="PF21090">
    <property type="entry name" value="P-loop_SecA"/>
    <property type="match status" value="1"/>
</dbReference>
<dbReference type="Pfam" id="PF02810">
    <property type="entry name" value="SEC-C"/>
    <property type="match status" value="1"/>
</dbReference>
<dbReference type="Pfam" id="PF07517">
    <property type="entry name" value="SecA_DEAD"/>
    <property type="match status" value="1"/>
</dbReference>
<dbReference type="Pfam" id="PF01043">
    <property type="entry name" value="SecA_PP_bind"/>
    <property type="match status" value="1"/>
</dbReference>
<dbReference type="Pfam" id="PF07516">
    <property type="entry name" value="SecA_SW"/>
    <property type="match status" value="1"/>
</dbReference>
<dbReference type="PRINTS" id="PR00906">
    <property type="entry name" value="SECA"/>
</dbReference>
<dbReference type="SMART" id="SM00957">
    <property type="entry name" value="SecA_DEAD"/>
    <property type="match status" value="1"/>
</dbReference>
<dbReference type="SMART" id="SM00958">
    <property type="entry name" value="SecA_PP_bind"/>
    <property type="match status" value="1"/>
</dbReference>
<dbReference type="SUPFAM" id="SSF81886">
    <property type="entry name" value="Helical scaffold and wing domains of SecA"/>
    <property type="match status" value="1"/>
</dbReference>
<dbReference type="SUPFAM" id="SSF52540">
    <property type="entry name" value="P-loop containing nucleoside triphosphate hydrolases"/>
    <property type="match status" value="2"/>
</dbReference>
<dbReference type="SUPFAM" id="SSF81767">
    <property type="entry name" value="Pre-protein crosslinking domain of SecA"/>
    <property type="match status" value="1"/>
</dbReference>
<dbReference type="PROSITE" id="PS01312">
    <property type="entry name" value="SECA"/>
    <property type="match status" value="1"/>
</dbReference>
<dbReference type="PROSITE" id="PS51196">
    <property type="entry name" value="SECA_MOTOR_DEAD"/>
    <property type="match status" value="1"/>
</dbReference>
<sequence length="932" mass="104805">MTTGFLQKIFGSRNQRLVKQYQKTVTTINALETQIEKLTDDQLRGKTDEFRQRVAAGESLDKLLPEAFAVCREASRRVLKMRHFDVQMIGGMVLHYGKIAEMRTGEGKTLVATLPVYLNALAGRGVHVVTVNDYLAQRDAEWMARLYNFLGLSVGINLSGMEHDQKQQAYAADITYGTNNEFGFDYLRDNMVYETDARVQRALNFAVVDEVDSILIDEARTPLIISGQAEDHTELYVRMNALPPLLERQIGEEKADGTGVEKPGDYTLDEKARQVFLTESGHEKAERLLAEWGLIGEGESLYAPQNITLMHHVYAALRAHTLFHKDQHYVVQNGEVVIVDEFTGRLMAGRRWSDGLHQAVEAKEHVKIQSENQTLASITFQNYFRMYAKLAGMTGTADTEAYEFNEIYGLETVVIPTNRPPKRIDKQDQIYKTAKERYDAVIRDIRDCYERGQPVLVGTTSIENSELLSHLLKQAGLPHEVLNAKQHEREAAIVAEAGRPKRVTIATNMAGRGTDIVLGGNAEKQAAFIEADEAIPADEKARRIQQLHDEWETLHEQVKAAGGLHIIGTERHESRRIDNQLRGRAGRQGDPGSSRFYLSLDDPLLRIFAGDRVRSIMDRLKMPEGEAIEAGIVTRSIESAQRKVEARNFDIRKQLLEYDDVSNDQRKVIYQQRNELLEAHDITETITAMRHGVVTEVVRQFVPEGSIEEQWDVPELEEALRNDWQLDLAIQEMVNESSSITAEEILDAVMTAADEQYEAKVAMVGRESFSAFERSVMLQTVDRLWREHLAALDHLRQGIHLRGYAQKNPKQEYKREAFELFAAMLEAIKQEVTRVVMNVQIQSPEQLEQAAEQIEERGGHLENVEYQHADYAEAGAPVANVAVAAAATATADMVGSAMTHSGPGGEMPKVGRNDPCPCGSGKKYKQCHGKLS</sequence>
<name>SECA_BURL3</name>
<feature type="chain" id="PRO_0000318331" description="Protein translocase subunit SecA">
    <location>
        <begin position="1"/>
        <end position="932"/>
    </location>
</feature>
<feature type="binding site" evidence="1">
    <location>
        <position position="87"/>
    </location>
    <ligand>
        <name>ATP</name>
        <dbReference type="ChEBI" id="CHEBI:30616"/>
    </ligand>
</feature>
<feature type="binding site" evidence="1">
    <location>
        <begin position="105"/>
        <end position="109"/>
    </location>
    <ligand>
        <name>ATP</name>
        <dbReference type="ChEBI" id="CHEBI:30616"/>
    </ligand>
</feature>
<feature type="binding site" evidence="1">
    <location>
        <position position="515"/>
    </location>
    <ligand>
        <name>ATP</name>
        <dbReference type="ChEBI" id="CHEBI:30616"/>
    </ligand>
</feature>
<feature type="binding site" evidence="1">
    <location>
        <position position="916"/>
    </location>
    <ligand>
        <name>Zn(2+)</name>
        <dbReference type="ChEBI" id="CHEBI:29105"/>
    </ligand>
</feature>
<feature type="binding site" evidence="1">
    <location>
        <position position="918"/>
    </location>
    <ligand>
        <name>Zn(2+)</name>
        <dbReference type="ChEBI" id="CHEBI:29105"/>
    </ligand>
</feature>
<feature type="binding site" evidence="1">
    <location>
        <position position="927"/>
    </location>
    <ligand>
        <name>Zn(2+)</name>
        <dbReference type="ChEBI" id="CHEBI:29105"/>
    </ligand>
</feature>
<feature type="binding site" evidence="1">
    <location>
        <position position="928"/>
    </location>
    <ligand>
        <name>Zn(2+)</name>
        <dbReference type="ChEBI" id="CHEBI:29105"/>
    </ligand>
</feature>
<organism>
    <name type="scientific">Burkholderia lata (strain ATCC 17760 / DSM 23089 / LMG 22485 / NCIMB 9086 / R18194 / 383)</name>
    <dbReference type="NCBI Taxonomy" id="482957"/>
    <lineage>
        <taxon>Bacteria</taxon>
        <taxon>Pseudomonadati</taxon>
        <taxon>Pseudomonadota</taxon>
        <taxon>Betaproteobacteria</taxon>
        <taxon>Burkholderiales</taxon>
        <taxon>Burkholderiaceae</taxon>
        <taxon>Burkholderia</taxon>
        <taxon>Burkholderia cepacia complex</taxon>
    </lineage>
</organism>
<gene>
    <name evidence="1" type="primary">secA</name>
    <name type="ordered locus">Bcep18194_A3654</name>
</gene>
<protein>
    <recommendedName>
        <fullName evidence="1">Protein translocase subunit SecA</fullName>
        <ecNumber evidence="1">7.4.2.8</ecNumber>
    </recommendedName>
</protein>
<proteinExistence type="inferred from homology"/>
<comment type="function">
    <text evidence="1">Part of the Sec protein translocase complex. Interacts with the SecYEG preprotein conducting channel. Has a central role in coupling the hydrolysis of ATP to the transfer of proteins into and across the cell membrane, serving both as a receptor for the preprotein-SecB complex and as an ATP-driven molecular motor driving the stepwise translocation of polypeptide chains across the membrane.</text>
</comment>
<comment type="catalytic activity">
    <reaction evidence="1">
        <text>ATP + H2O + cellular proteinSide 1 = ADP + phosphate + cellular proteinSide 2.</text>
        <dbReference type="EC" id="7.4.2.8"/>
    </reaction>
</comment>
<comment type="cofactor">
    <cofactor evidence="1">
        <name>Zn(2+)</name>
        <dbReference type="ChEBI" id="CHEBI:29105"/>
    </cofactor>
    <text evidence="1">May bind 1 zinc ion per subunit.</text>
</comment>
<comment type="subunit">
    <text evidence="1">Monomer and homodimer. Part of the essential Sec protein translocation apparatus which comprises SecA, SecYEG and auxiliary proteins SecDF-YajC and YidC.</text>
</comment>
<comment type="subcellular location">
    <subcellularLocation>
        <location evidence="1">Cell inner membrane</location>
        <topology evidence="1">Peripheral membrane protein</topology>
        <orientation evidence="1">Cytoplasmic side</orientation>
    </subcellularLocation>
    <subcellularLocation>
        <location evidence="1">Cytoplasm</location>
    </subcellularLocation>
    <text evidence="1">Distribution is 50-50.</text>
</comment>
<comment type="similarity">
    <text evidence="1">Belongs to the SecA family.</text>
</comment>
<keyword id="KW-0067">ATP-binding</keyword>
<keyword id="KW-0997">Cell inner membrane</keyword>
<keyword id="KW-1003">Cell membrane</keyword>
<keyword id="KW-0963">Cytoplasm</keyword>
<keyword id="KW-0472">Membrane</keyword>
<keyword id="KW-0479">Metal-binding</keyword>
<keyword id="KW-0547">Nucleotide-binding</keyword>
<keyword id="KW-0653">Protein transport</keyword>
<keyword id="KW-1278">Translocase</keyword>
<keyword id="KW-0811">Translocation</keyword>
<keyword id="KW-0813">Transport</keyword>
<keyword id="KW-0862">Zinc</keyword>
<accession>Q39JW1</accession>
<reference key="1">
    <citation type="submission" date="2005-10" db="EMBL/GenBank/DDBJ databases">
        <title>Complete sequence of chromosome 1 of Burkholderia sp. 383.</title>
        <authorList>
            <consortium name="US DOE Joint Genome Institute"/>
            <person name="Copeland A."/>
            <person name="Lucas S."/>
            <person name="Lapidus A."/>
            <person name="Barry K."/>
            <person name="Detter J.C."/>
            <person name="Glavina T."/>
            <person name="Hammon N."/>
            <person name="Israni S."/>
            <person name="Pitluck S."/>
            <person name="Chain P."/>
            <person name="Malfatti S."/>
            <person name="Shin M."/>
            <person name="Vergez L."/>
            <person name="Schmutz J."/>
            <person name="Larimer F."/>
            <person name="Land M."/>
            <person name="Kyrpides N."/>
            <person name="Lykidis A."/>
            <person name="Richardson P."/>
        </authorList>
    </citation>
    <scope>NUCLEOTIDE SEQUENCE [LARGE SCALE GENOMIC DNA]</scope>
    <source>
        <strain>ATCC 17760 / DSM 23089 / LMG 22485 / NCIMB 9086 / R18194 / 383</strain>
    </source>
</reference>